<gene>
    <name type="primary">Adtrp</name>
    <name type="ORF">Aa2-020</name>
</gene>
<keyword id="KW-0025">Alternative splicing</keyword>
<keyword id="KW-1003">Cell membrane</keyword>
<keyword id="KW-0378">Hydrolase</keyword>
<keyword id="KW-0443">Lipid metabolism</keyword>
<keyword id="KW-0472">Membrane</keyword>
<keyword id="KW-1185">Reference proteome</keyword>
<keyword id="KW-0812">Transmembrane</keyword>
<keyword id="KW-1133">Transmembrane helix</keyword>
<dbReference type="EC" id="3.1.-.-" evidence="1"/>
<dbReference type="EMBL" id="AY325171">
    <property type="protein sequence ID" value="AAP92572.1"/>
    <property type="molecule type" value="mRNA"/>
</dbReference>
<dbReference type="EMBL" id="BC088287">
    <property type="protein sequence ID" value="AAH88287.1"/>
    <property type="molecule type" value="mRNA"/>
</dbReference>
<dbReference type="RefSeq" id="NP_001014166.1">
    <molecule id="Q5M828-1"/>
    <property type="nucleotide sequence ID" value="NM_001014144.2"/>
</dbReference>
<dbReference type="RefSeq" id="NP_001382539.1">
    <molecule id="Q5M828-1"/>
    <property type="nucleotide sequence ID" value="NM_001395610.1"/>
</dbReference>
<dbReference type="RefSeq" id="XP_006253895.1">
    <property type="nucleotide sequence ID" value="XM_006253833.3"/>
</dbReference>
<dbReference type="FunCoup" id="Q5M828">
    <property type="interactions" value="6"/>
</dbReference>
<dbReference type="STRING" id="10116.ENSRNOP00000057148"/>
<dbReference type="PhosphoSitePlus" id="Q5M828"/>
<dbReference type="PaxDb" id="10116-ENSRNOP00000057148"/>
<dbReference type="Ensembl" id="ENSRNOT00000019478.7">
    <molecule id="Q5M828-2"/>
    <property type="protein sequence ID" value="ENSRNOP00000019478.4"/>
    <property type="gene ID" value="ENSRNOG00000014481.8"/>
</dbReference>
<dbReference type="Ensembl" id="ENSRNOT00000115307.1">
    <molecule id="Q5M828-1"/>
    <property type="protein sequence ID" value="ENSRNOP00000076653.1"/>
    <property type="gene ID" value="ENSRNOG00000014481.8"/>
</dbReference>
<dbReference type="GeneID" id="361228"/>
<dbReference type="KEGG" id="rno:361228"/>
<dbReference type="UCSC" id="RGD:1305679">
    <molecule id="Q5M828-1"/>
    <property type="organism name" value="rat"/>
</dbReference>
<dbReference type="AGR" id="RGD:1305679"/>
<dbReference type="CTD" id="84830"/>
<dbReference type="RGD" id="1305679">
    <property type="gene designation" value="Adtrp"/>
</dbReference>
<dbReference type="eggNOG" id="KOG3989">
    <property type="taxonomic scope" value="Eukaryota"/>
</dbReference>
<dbReference type="GeneTree" id="ENSGT00940000158284"/>
<dbReference type="HOGENOM" id="CLU_073346_2_0_1"/>
<dbReference type="InParanoid" id="Q5M828"/>
<dbReference type="OMA" id="AFFPPWI"/>
<dbReference type="OrthoDB" id="1898221at2759"/>
<dbReference type="PhylomeDB" id="Q5M828"/>
<dbReference type="TreeFam" id="TF318170"/>
<dbReference type="PRO" id="PR:Q5M828"/>
<dbReference type="Proteomes" id="UP000002494">
    <property type="component" value="Chromosome 17"/>
</dbReference>
<dbReference type="Bgee" id="ENSRNOG00000014481">
    <property type="expression patterns" value="Expressed in liver and 17 other cell types or tissues"/>
</dbReference>
<dbReference type="ExpressionAtlas" id="Q5M828">
    <property type="expression patterns" value="baseline and differential"/>
</dbReference>
<dbReference type="GO" id="GO:0005901">
    <property type="term" value="C:caveola"/>
    <property type="evidence" value="ECO:0000266"/>
    <property type="project" value="RGD"/>
</dbReference>
<dbReference type="GO" id="GO:0009986">
    <property type="term" value="C:cell surface"/>
    <property type="evidence" value="ECO:0000266"/>
    <property type="project" value="RGD"/>
</dbReference>
<dbReference type="GO" id="GO:0012505">
    <property type="term" value="C:endomembrane system"/>
    <property type="evidence" value="ECO:0000318"/>
    <property type="project" value="GO_Central"/>
</dbReference>
<dbReference type="GO" id="GO:0016020">
    <property type="term" value="C:membrane"/>
    <property type="evidence" value="ECO:0000266"/>
    <property type="project" value="RGD"/>
</dbReference>
<dbReference type="GO" id="GO:0016787">
    <property type="term" value="F:hydrolase activity"/>
    <property type="evidence" value="ECO:0000266"/>
    <property type="project" value="RGD"/>
</dbReference>
<dbReference type="GO" id="GO:0002042">
    <property type="term" value="P:cell migration involved in sprouting angiogenesis"/>
    <property type="evidence" value="ECO:0000266"/>
    <property type="project" value="RGD"/>
</dbReference>
<dbReference type="GO" id="GO:0140052">
    <property type="term" value="P:cellular response to oxidised low-density lipoprotein particle stimulus"/>
    <property type="evidence" value="ECO:0000266"/>
    <property type="project" value="RGD"/>
</dbReference>
<dbReference type="GO" id="GO:0071383">
    <property type="term" value="P:cellular response to steroid hormone stimulus"/>
    <property type="evidence" value="ECO:0000266"/>
    <property type="project" value="RGD"/>
</dbReference>
<dbReference type="GO" id="GO:0042758">
    <property type="term" value="P:long-chain fatty acid catabolic process"/>
    <property type="evidence" value="ECO:0000266"/>
    <property type="project" value="RGD"/>
</dbReference>
<dbReference type="GO" id="GO:0030195">
    <property type="term" value="P:negative regulation of blood coagulation"/>
    <property type="evidence" value="ECO:0000266"/>
    <property type="project" value="RGD"/>
</dbReference>
<dbReference type="GO" id="GO:0003332">
    <property type="term" value="P:negative regulation of extracellular matrix constituent secretion"/>
    <property type="evidence" value="ECO:0000266"/>
    <property type="project" value="RGD"/>
</dbReference>
<dbReference type="GO" id="GO:1903038">
    <property type="term" value="P:negative regulation of leukocyte cell-cell adhesion"/>
    <property type="evidence" value="ECO:0000266"/>
    <property type="project" value="RGD"/>
</dbReference>
<dbReference type="GO" id="GO:0002686">
    <property type="term" value="P:negative regulation of leukocyte migration"/>
    <property type="evidence" value="ECO:0000266"/>
    <property type="project" value="RGD"/>
</dbReference>
<dbReference type="GO" id="GO:2000402">
    <property type="term" value="P:negative regulation of lymphocyte migration"/>
    <property type="evidence" value="ECO:0000266"/>
    <property type="project" value="RGD"/>
</dbReference>
<dbReference type="GO" id="GO:0050709">
    <property type="term" value="P:negative regulation of protein secretion"/>
    <property type="evidence" value="ECO:0000266"/>
    <property type="project" value="RGD"/>
</dbReference>
<dbReference type="GO" id="GO:0010628">
    <property type="term" value="P:positive regulation of gene expression"/>
    <property type="evidence" value="ECO:0000266"/>
    <property type="project" value="RGD"/>
</dbReference>
<dbReference type="GO" id="GO:0051897">
    <property type="term" value="P:positive regulation of phosphatidylinositol 3-kinase/protein kinase B signal transduction"/>
    <property type="evidence" value="ECO:0000266"/>
    <property type="project" value="RGD"/>
</dbReference>
<dbReference type="InterPro" id="IPR006838">
    <property type="entry name" value="ADTRP_AIG1"/>
</dbReference>
<dbReference type="PANTHER" id="PTHR10989:SF17">
    <property type="entry name" value="ANDROGEN-DEPENDENT TFPI-REGULATING PROTEIN"/>
    <property type="match status" value="1"/>
</dbReference>
<dbReference type="PANTHER" id="PTHR10989">
    <property type="entry name" value="ANDROGEN-INDUCED PROTEIN 1-RELATED"/>
    <property type="match status" value="1"/>
</dbReference>
<dbReference type="Pfam" id="PF04750">
    <property type="entry name" value="Far-17a_AIG1"/>
    <property type="match status" value="1"/>
</dbReference>
<accession>Q5M828</accession>
<accession>Q7TP74</accession>
<proteinExistence type="evidence at transcript level"/>
<reference key="1">
    <citation type="submission" date="2003-06" db="EMBL/GenBank/DDBJ databases">
        <title>Liver regeneration after PH.</title>
        <authorList>
            <person name="Xu C.S."/>
            <person name="Li W.Q."/>
            <person name="Li Y.C."/>
            <person name="Wang G.P."/>
            <person name="Chai L.Q."/>
            <person name="Yuan J.Y."/>
            <person name="Yang K.J."/>
            <person name="Yan H.M."/>
            <person name="Chang C.F."/>
            <person name="Zhao L.F."/>
            <person name="Ma H."/>
            <person name="Wang L."/>
            <person name="Wang S.F."/>
            <person name="Han H.P."/>
            <person name="Shi J.B."/>
            <person name="Rahman S."/>
            <person name="Wang Q.N."/>
            <person name="Zhang J.B."/>
        </authorList>
    </citation>
    <scope>NUCLEOTIDE SEQUENCE [LARGE SCALE MRNA] (ISOFORM 2)</scope>
    <source>
        <tissue>Liver</tissue>
    </source>
</reference>
<reference key="2">
    <citation type="journal article" date="2004" name="Genome Res.">
        <title>The status, quality, and expansion of the NIH full-length cDNA project: the Mammalian Gene Collection (MGC).</title>
        <authorList>
            <consortium name="The MGC Project Team"/>
        </authorList>
    </citation>
    <scope>NUCLEOTIDE SEQUENCE [LARGE SCALE MRNA] (ISOFORM 1)</scope>
    <source>
        <tissue>Liver</tissue>
    </source>
</reference>
<evidence type="ECO:0000250" key="1">
    <source>
        <dbReference type="UniProtKB" id="Q96IZ2"/>
    </source>
</evidence>
<evidence type="ECO:0000255" key="2"/>
<evidence type="ECO:0000303" key="3">
    <source ref="1"/>
</evidence>
<evidence type="ECO:0000305" key="4"/>
<comment type="function">
    <text evidence="1">Hydrolyzes bioactive fatty-acid esters of hydroxy-fatty acids (FAHFAs), but not other major classes of lipids (By similarity). Shows a preference for FAHFAs with branching distal from the carboxylate head group of the lipids (By similarity). Regulates the expression and the cell-associated anticoagulant activity of the inhibitor TFPI in endothelial cells (in vitro) (By similarity).</text>
</comment>
<comment type="catalytic activity">
    <reaction evidence="1">
        <text>9-hexadecanoyloxy-octadecanoate + H2O = 9-hydroxy-octadecanoate + hexadecanoate + H(+)</text>
        <dbReference type="Rhea" id="RHEA:52052"/>
        <dbReference type="ChEBI" id="CHEBI:7896"/>
        <dbReference type="ChEBI" id="CHEBI:15377"/>
        <dbReference type="ChEBI" id="CHEBI:15378"/>
        <dbReference type="ChEBI" id="CHEBI:83670"/>
        <dbReference type="ChEBI" id="CHEBI:136286"/>
    </reaction>
    <physiologicalReaction direction="left-to-right" evidence="1">
        <dbReference type="Rhea" id="RHEA:52053"/>
    </physiologicalReaction>
</comment>
<comment type="catalytic activity">
    <reaction evidence="1">
        <text>12-hexadecanoyloxy-octadecanoate + H2O = 12-hydroxyoctadecanoate + hexadecanoate + H(+)</text>
        <dbReference type="Rhea" id="RHEA:52056"/>
        <dbReference type="ChEBI" id="CHEBI:7896"/>
        <dbReference type="ChEBI" id="CHEBI:15377"/>
        <dbReference type="ChEBI" id="CHEBI:15378"/>
        <dbReference type="ChEBI" id="CHEBI:83677"/>
        <dbReference type="ChEBI" id="CHEBI:84201"/>
    </reaction>
    <physiologicalReaction direction="left-to-right" evidence="1">
        <dbReference type="Rhea" id="RHEA:52057"/>
    </physiologicalReaction>
</comment>
<comment type="catalytic activity">
    <reaction evidence="1">
        <text>9-(9Z-hexadecenoyloxy)-octadecanoate + H2O = (9Z)-hexadecenoate + 9-hydroxy-octadecanoate + H(+)</text>
        <dbReference type="Rhea" id="RHEA:52068"/>
        <dbReference type="ChEBI" id="CHEBI:15377"/>
        <dbReference type="ChEBI" id="CHEBI:15378"/>
        <dbReference type="ChEBI" id="CHEBI:32372"/>
        <dbReference type="ChEBI" id="CHEBI:136286"/>
        <dbReference type="ChEBI" id="CHEBI:136309"/>
    </reaction>
    <physiologicalReaction direction="left-to-right" evidence="1">
        <dbReference type="Rhea" id="RHEA:52069"/>
    </physiologicalReaction>
</comment>
<comment type="catalytic activity">
    <reaction evidence="1">
        <text>12-(9Z-hexadecenoyloxy)-octadecanoate + H2O = 12-hydroxyoctadecanoate + (9Z)-hexadecenoate + H(+)</text>
        <dbReference type="Rhea" id="RHEA:52072"/>
        <dbReference type="ChEBI" id="CHEBI:15377"/>
        <dbReference type="ChEBI" id="CHEBI:15378"/>
        <dbReference type="ChEBI" id="CHEBI:32372"/>
        <dbReference type="ChEBI" id="CHEBI:84201"/>
        <dbReference type="ChEBI" id="CHEBI:136312"/>
    </reaction>
    <physiologicalReaction direction="left-to-right" evidence="1">
        <dbReference type="Rhea" id="RHEA:52073"/>
    </physiologicalReaction>
</comment>
<comment type="catalytic activity">
    <reaction evidence="1">
        <text>13-(9Z-hexadecenoyloxy)-octadecanoate + H2O = 13-hydroxy-octadecanoate + (9Z)-hexadecenoate + H(+)</text>
        <dbReference type="Rhea" id="RHEA:52076"/>
        <dbReference type="ChEBI" id="CHEBI:15377"/>
        <dbReference type="ChEBI" id="CHEBI:15378"/>
        <dbReference type="ChEBI" id="CHEBI:32372"/>
        <dbReference type="ChEBI" id="CHEBI:136304"/>
        <dbReference type="ChEBI" id="CHEBI:136315"/>
    </reaction>
    <physiologicalReaction direction="left-to-right" evidence="1">
        <dbReference type="Rhea" id="RHEA:52077"/>
    </physiologicalReaction>
</comment>
<comment type="catalytic activity">
    <reaction evidence="1">
        <text>9-octadecanoyloxy-octadecanoate + H2O = 9-hydroxy-octadecanoate + octadecanoate + H(+)</text>
        <dbReference type="Rhea" id="RHEA:52096"/>
        <dbReference type="ChEBI" id="CHEBI:15377"/>
        <dbReference type="ChEBI" id="CHEBI:15378"/>
        <dbReference type="ChEBI" id="CHEBI:25629"/>
        <dbReference type="ChEBI" id="CHEBI:136286"/>
        <dbReference type="ChEBI" id="CHEBI:136373"/>
    </reaction>
    <physiologicalReaction direction="left-to-right" evidence="1">
        <dbReference type="Rhea" id="RHEA:52097"/>
    </physiologicalReaction>
</comment>
<comment type="catalytic activity">
    <reaction evidence="1">
        <text>12-octadecanoyloxy-octadecanoate + H2O = 12-hydroxyoctadecanoate + octadecanoate + H(+)</text>
        <dbReference type="Rhea" id="RHEA:52080"/>
        <dbReference type="ChEBI" id="CHEBI:15377"/>
        <dbReference type="ChEBI" id="CHEBI:15378"/>
        <dbReference type="ChEBI" id="CHEBI:25629"/>
        <dbReference type="ChEBI" id="CHEBI:84201"/>
        <dbReference type="ChEBI" id="CHEBI:136330"/>
    </reaction>
    <physiologicalReaction direction="left-to-right" evidence="1">
        <dbReference type="Rhea" id="RHEA:52081"/>
    </physiologicalReaction>
</comment>
<comment type="catalytic activity">
    <reaction evidence="1">
        <text>13-octadecanoyloxy-octadecanoate + H2O = 13-hydroxy-octadecanoate + octadecanoate + H(+)</text>
        <dbReference type="Rhea" id="RHEA:52084"/>
        <dbReference type="ChEBI" id="CHEBI:15377"/>
        <dbReference type="ChEBI" id="CHEBI:15378"/>
        <dbReference type="ChEBI" id="CHEBI:25629"/>
        <dbReference type="ChEBI" id="CHEBI:136304"/>
        <dbReference type="ChEBI" id="CHEBI:136335"/>
    </reaction>
    <physiologicalReaction direction="left-to-right" evidence="1">
        <dbReference type="Rhea" id="RHEA:52085"/>
    </physiologicalReaction>
</comment>
<comment type="catalytic activity">
    <reaction evidence="1">
        <text>9-(9Z-octadecenoyloxy)-octadecanoate + H2O = 9-hydroxy-octadecanoate + (9Z)-octadecenoate + H(+)</text>
        <dbReference type="Rhea" id="RHEA:52048"/>
        <dbReference type="ChEBI" id="CHEBI:15377"/>
        <dbReference type="ChEBI" id="CHEBI:15378"/>
        <dbReference type="ChEBI" id="CHEBI:30823"/>
        <dbReference type="ChEBI" id="CHEBI:136282"/>
        <dbReference type="ChEBI" id="CHEBI:136286"/>
    </reaction>
    <physiologicalReaction direction="left-to-right" evidence="1">
        <dbReference type="Rhea" id="RHEA:52049"/>
    </physiologicalReaction>
</comment>
<comment type="catalytic activity">
    <reaction evidence="1">
        <text>12-(9Z-octadecenoyloxy)-octadecanoate + H2O = 12-hydroxyoctadecanoate + (9Z)-octadecenoate + H(+)</text>
        <dbReference type="Rhea" id="RHEA:52060"/>
        <dbReference type="ChEBI" id="CHEBI:15377"/>
        <dbReference type="ChEBI" id="CHEBI:15378"/>
        <dbReference type="ChEBI" id="CHEBI:30823"/>
        <dbReference type="ChEBI" id="CHEBI:84201"/>
        <dbReference type="ChEBI" id="CHEBI:136302"/>
    </reaction>
    <physiologicalReaction direction="left-to-right" evidence="1">
        <dbReference type="Rhea" id="RHEA:52061"/>
    </physiologicalReaction>
</comment>
<comment type="catalytic activity">
    <reaction evidence="1">
        <text>13-(9Z-octadecenoyloxy)-octadecanoate + H2O = 13-hydroxy-octadecanoate + (9Z)-octadecenoate + H(+)</text>
        <dbReference type="Rhea" id="RHEA:52064"/>
        <dbReference type="ChEBI" id="CHEBI:15377"/>
        <dbReference type="ChEBI" id="CHEBI:15378"/>
        <dbReference type="ChEBI" id="CHEBI:30823"/>
        <dbReference type="ChEBI" id="CHEBI:136303"/>
        <dbReference type="ChEBI" id="CHEBI:136304"/>
    </reaction>
    <physiologicalReaction direction="left-to-right" evidence="1">
        <dbReference type="Rhea" id="RHEA:52065"/>
    </physiologicalReaction>
</comment>
<comment type="catalytic activity">
    <reaction evidence="1">
        <text>5-(9Z-octadecenoyloxy)-octadecanoate + H2O = 5-hydroxy-octadecanoate + (9Z)-octadecenoate + H(+)</text>
        <dbReference type="Rhea" id="RHEA:52100"/>
        <dbReference type="ChEBI" id="CHEBI:15377"/>
        <dbReference type="ChEBI" id="CHEBI:15378"/>
        <dbReference type="ChEBI" id="CHEBI:30823"/>
        <dbReference type="ChEBI" id="CHEBI:136370"/>
        <dbReference type="ChEBI" id="CHEBI:136389"/>
    </reaction>
    <physiologicalReaction direction="left-to-right" evidence="1">
        <dbReference type="Rhea" id="RHEA:52101"/>
    </physiologicalReaction>
</comment>
<comment type="subcellular location">
    <subcellularLocation>
        <location evidence="1">Cell membrane</location>
        <topology evidence="2">Multi-pass membrane protein</topology>
    </subcellularLocation>
    <text evidence="1">Colocalized with TFPI and CAV1 in lipid rafts.</text>
</comment>
<comment type="alternative products">
    <event type="alternative splicing"/>
    <isoform>
        <id>Q5M828-1</id>
        <name>1</name>
        <sequence type="displayed"/>
    </isoform>
    <isoform>
        <id>Q5M828-2</id>
        <name>2</name>
        <sequence type="described" ref="VSP_013635 VSP_013636 VSP_013637"/>
    </isoform>
</comment>
<comment type="similarity">
    <text evidence="4">Belongs to the AIG1 family.</text>
</comment>
<organism>
    <name type="scientific">Rattus norvegicus</name>
    <name type="common">Rat</name>
    <dbReference type="NCBI Taxonomy" id="10116"/>
    <lineage>
        <taxon>Eukaryota</taxon>
        <taxon>Metazoa</taxon>
        <taxon>Chordata</taxon>
        <taxon>Craniata</taxon>
        <taxon>Vertebrata</taxon>
        <taxon>Euteleostomi</taxon>
        <taxon>Mammalia</taxon>
        <taxon>Eutheria</taxon>
        <taxon>Euarchontoglires</taxon>
        <taxon>Glires</taxon>
        <taxon>Rodentia</taxon>
        <taxon>Myomorpha</taxon>
        <taxon>Muroidea</taxon>
        <taxon>Muridae</taxon>
        <taxon>Murinae</taxon>
        <taxon>Rattus</taxon>
    </lineage>
</organism>
<sequence>MTKTTTCLYHFVVLNWYIFLNYYIPQIGKDEEKLKEFHDGGRSKYLTLLNLLLQAVFFGVACLDDVLKRVIGRKDIKFITYFRDLLFTTLAFPLSTFVFLVFWSLFHYDRSLVYPKGLDDFFPAWVNHAMHTSIFPFSLAETVLRPHNYPSKKLGLSLLGACNFAYIIRILWRYVQTGNWVYPVFASLSPLGIILFFSASYILSASLYLFGEKINHWKWGATVKPRMKKN</sequence>
<name>ADTRP_RAT</name>
<feature type="chain" id="PRO_0000190103" description="Androgen-dependent TFPI-regulating protein">
    <location>
        <begin position="1"/>
        <end position="230"/>
    </location>
</feature>
<feature type="topological domain" description="Cytoplasmic" evidence="1">
    <location>
        <begin position="1"/>
        <end position="7"/>
    </location>
</feature>
<feature type="transmembrane region" description="Helical" evidence="2">
    <location>
        <begin position="8"/>
        <end position="28"/>
    </location>
</feature>
<feature type="topological domain" description="Extracellular" evidence="1">
    <location>
        <begin position="29"/>
        <end position="45"/>
    </location>
</feature>
<feature type="transmembrane region" description="Helical" evidence="2">
    <location>
        <begin position="46"/>
        <end position="66"/>
    </location>
</feature>
<feature type="topological domain" description="Cytoplasmic" evidence="1">
    <location>
        <begin position="67"/>
        <end position="85"/>
    </location>
</feature>
<feature type="transmembrane region" description="Helical" evidence="2">
    <location>
        <begin position="86"/>
        <end position="106"/>
    </location>
</feature>
<feature type="topological domain" description="Extracellular" evidence="1">
    <location>
        <begin position="107"/>
        <end position="120"/>
    </location>
</feature>
<feature type="transmembrane region" description="Helical" evidence="2">
    <location>
        <begin position="121"/>
        <end position="141"/>
    </location>
</feature>
<feature type="topological domain" description="Cytoplasmic" evidence="1">
    <location>
        <begin position="142"/>
        <end position="155"/>
    </location>
</feature>
<feature type="transmembrane region" description="Helical" evidence="2">
    <location>
        <begin position="156"/>
        <end position="173"/>
    </location>
</feature>
<feature type="topological domain" description="Extracellular" evidence="1">
    <location>
        <begin position="174"/>
        <end position="190"/>
    </location>
</feature>
<feature type="transmembrane region" description="Helical" evidence="2">
    <location>
        <begin position="191"/>
        <end position="211"/>
    </location>
</feature>
<feature type="topological domain" description="Cytoplasmic" evidence="1">
    <location>
        <begin position="212"/>
        <end position="230"/>
    </location>
</feature>
<feature type="site" description="Important for catalytic activity" evidence="1">
    <location>
        <position position="47"/>
    </location>
</feature>
<feature type="site" description="Important for catalytic activity" evidence="1">
    <location>
        <position position="131"/>
    </location>
</feature>
<feature type="splice variant" id="VSP_013635" description="In isoform 2." evidence="3">
    <original>LLQ</original>
    <variation>APESECVNPSESSEPQSSFCDQSRSMVRKDGE</variation>
    <location>
        <begin position="52"/>
        <end position="54"/>
    </location>
</feature>
<feature type="splice variant" id="VSP_013636" description="In isoform 2." evidence="3">
    <original>HTSIFPFSLA</original>
    <variation>NNCSISTTFS</variation>
    <location>
        <begin position="131"/>
        <end position="140"/>
    </location>
</feature>
<feature type="splice variant" id="VSP_013637" description="In isoform 2." evidence="3">
    <location>
        <begin position="141"/>
        <end position="230"/>
    </location>
</feature>
<protein>
    <recommendedName>
        <fullName>Androgen-dependent TFPI-regulating protein</fullName>
    </recommendedName>
    <alternativeName>
        <fullName evidence="1">Fatty acid esters of hydroxy fatty acids hydrolase ADTRP</fullName>
        <shortName evidence="1">FAHFA hydrolase ADTRP</shortName>
        <ecNumber evidence="1">3.1.-.-</ecNumber>
    </alternativeName>
    <alternativeName>
        <fullName>Liver regeneration-related protein LRRG140</fullName>
    </alternativeName>
</protein>